<keyword id="KW-0028">Amino-acid biosynthesis</keyword>
<keyword id="KW-0198">Cysteine biosynthesis</keyword>
<keyword id="KW-0663">Pyridoxal phosphate</keyword>
<keyword id="KW-1185">Reference proteome</keyword>
<keyword id="KW-0808">Transferase</keyword>
<evidence type="ECO:0000250" key="1"/>
<evidence type="ECO:0000250" key="2">
    <source>
        <dbReference type="UniProtKB" id="P9WP53"/>
    </source>
</evidence>
<evidence type="ECO:0000305" key="3"/>
<name>CYSM_MYCTO</name>
<gene>
    <name type="primary">cysM</name>
    <name type="ordered locus">MT1377</name>
</gene>
<feature type="chain" id="PRO_0000427012" description="O-phosphoserine sulfhydrylase">
    <location>
        <begin position="1"/>
        <end position="323"/>
    </location>
</feature>
<feature type="binding site" evidence="1">
    <location>
        <position position="81"/>
    </location>
    <ligand>
        <name>pyridoxal 5'-phosphate</name>
        <dbReference type="ChEBI" id="CHEBI:597326"/>
    </ligand>
</feature>
<feature type="binding site">
    <location>
        <begin position="184"/>
        <end position="188"/>
    </location>
    <ligand>
        <name>pyridoxal 5'-phosphate</name>
        <dbReference type="ChEBI" id="CHEBI:597326"/>
    </ligand>
</feature>
<feature type="binding site" evidence="1">
    <location>
        <position position="220"/>
    </location>
    <ligand>
        <name>substrate</name>
    </ligand>
</feature>
<feature type="binding site" evidence="1">
    <location>
        <position position="265"/>
    </location>
    <ligand>
        <name>pyridoxal 5'-phosphate</name>
        <dbReference type="ChEBI" id="CHEBI:597326"/>
    </ligand>
</feature>
<feature type="modified residue" description="N6-(pyridoxal phosphate)lysine" evidence="1">
    <location>
        <position position="51"/>
    </location>
</feature>
<reference key="1">
    <citation type="journal article" date="2002" name="J. Bacteriol.">
        <title>Whole-genome comparison of Mycobacterium tuberculosis clinical and laboratory strains.</title>
        <authorList>
            <person name="Fleischmann R.D."/>
            <person name="Alland D."/>
            <person name="Eisen J.A."/>
            <person name="Carpenter L."/>
            <person name="White O."/>
            <person name="Peterson J.D."/>
            <person name="DeBoy R.T."/>
            <person name="Dodson R.J."/>
            <person name="Gwinn M.L."/>
            <person name="Haft D.H."/>
            <person name="Hickey E.K."/>
            <person name="Kolonay J.F."/>
            <person name="Nelson W.C."/>
            <person name="Umayam L.A."/>
            <person name="Ermolaeva M.D."/>
            <person name="Salzberg S.L."/>
            <person name="Delcher A."/>
            <person name="Utterback T.R."/>
            <person name="Weidman J.F."/>
            <person name="Khouri H.M."/>
            <person name="Gill J."/>
            <person name="Mikula A."/>
            <person name="Bishai W."/>
            <person name="Jacobs W.R. Jr."/>
            <person name="Venter J.C."/>
            <person name="Fraser C.M."/>
        </authorList>
    </citation>
    <scope>NUCLEOTIDE SEQUENCE [LARGE SCALE GENOMIC DNA]</scope>
    <source>
        <strain>CDC 1551 / Oshkosh</strain>
    </source>
</reference>
<organism>
    <name type="scientific">Mycobacterium tuberculosis (strain CDC 1551 / Oshkosh)</name>
    <dbReference type="NCBI Taxonomy" id="83331"/>
    <lineage>
        <taxon>Bacteria</taxon>
        <taxon>Bacillati</taxon>
        <taxon>Actinomycetota</taxon>
        <taxon>Actinomycetes</taxon>
        <taxon>Mycobacteriales</taxon>
        <taxon>Mycobacteriaceae</taxon>
        <taxon>Mycobacterium</taxon>
        <taxon>Mycobacterium tuberculosis complex</taxon>
    </lineage>
</organism>
<protein>
    <recommendedName>
        <fullName>O-phosphoserine sulfhydrylase</fullName>
        <shortName>OPS sulfhydrylase</shortName>
        <ecNumber evidence="2">2.5.1.113</ecNumber>
    </recommendedName>
    <alternativeName>
        <fullName>CysO-thiocarboxylate-dependent cysteine synthase</fullName>
    </alternativeName>
    <alternativeName>
        <fullName>Cysteine synthase B</fullName>
        <shortName>CSase B</shortName>
    </alternativeName>
    <alternativeName>
        <fullName>O-phosphoserine-specific cysteine synthase</fullName>
    </alternativeName>
    <alternativeName>
        <fullName>[CysO sulfur-carrier protein]-thiocarboxylate-dependent cysteine synthase</fullName>
    </alternativeName>
</protein>
<dbReference type="EC" id="2.5.1.113" evidence="2"/>
<dbReference type="EMBL" id="AE000516">
    <property type="protein sequence ID" value="AAK45642.1"/>
    <property type="molecule type" value="Genomic_DNA"/>
</dbReference>
<dbReference type="PIR" id="D70771">
    <property type="entry name" value="D70771"/>
</dbReference>
<dbReference type="RefSeq" id="WP_003406912.1">
    <property type="nucleotide sequence ID" value="NZ_KK341227.1"/>
</dbReference>
<dbReference type="SMR" id="P9WP52"/>
<dbReference type="GeneID" id="45425314"/>
<dbReference type="KEGG" id="mtc:MT1377"/>
<dbReference type="PATRIC" id="fig|83331.31.peg.1485"/>
<dbReference type="HOGENOM" id="CLU_021018_1_0_11"/>
<dbReference type="UniPathway" id="UPA00136"/>
<dbReference type="Proteomes" id="UP000001020">
    <property type="component" value="Chromosome"/>
</dbReference>
<dbReference type="GO" id="GO:0004124">
    <property type="term" value="F:cysteine synthase activity"/>
    <property type="evidence" value="ECO:0007669"/>
    <property type="project" value="InterPro"/>
</dbReference>
<dbReference type="GO" id="GO:0006535">
    <property type="term" value="P:cysteine biosynthetic process from serine"/>
    <property type="evidence" value="ECO:0007669"/>
    <property type="project" value="InterPro"/>
</dbReference>
<dbReference type="CDD" id="cd01561">
    <property type="entry name" value="CBS_like"/>
    <property type="match status" value="1"/>
</dbReference>
<dbReference type="FunFam" id="3.40.50.1100:FF:000023">
    <property type="entry name" value="Cysteine synthase"/>
    <property type="match status" value="1"/>
</dbReference>
<dbReference type="Gene3D" id="3.40.50.1100">
    <property type="match status" value="2"/>
</dbReference>
<dbReference type="InterPro" id="IPR005856">
    <property type="entry name" value="Cys_synth"/>
</dbReference>
<dbReference type="InterPro" id="IPR050214">
    <property type="entry name" value="Cys_Synth/Cystath_Beta-Synth"/>
</dbReference>
<dbReference type="InterPro" id="IPR001216">
    <property type="entry name" value="P-phosphate_BS"/>
</dbReference>
<dbReference type="InterPro" id="IPR001926">
    <property type="entry name" value="TrpB-like_PALP"/>
</dbReference>
<dbReference type="InterPro" id="IPR036052">
    <property type="entry name" value="TrpB-like_PALP_sf"/>
</dbReference>
<dbReference type="NCBIfam" id="TIGR01136">
    <property type="entry name" value="cysKM"/>
    <property type="match status" value="1"/>
</dbReference>
<dbReference type="PANTHER" id="PTHR10314">
    <property type="entry name" value="CYSTATHIONINE BETA-SYNTHASE"/>
    <property type="match status" value="1"/>
</dbReference>
<dbReference type="Pfam" id="PF00291">
    <property type="entry name" value="PALP"/>
    <property type="match status" value="1"/>
</dbReference>
<dbReference type="SUPFAM" id="SSF53686">
    <property type="entry name" value="Tryptophan synthase beta subunit-like PLP-dependent enzymes"/>
    <property type="match status" value="1"/>
</dbReference>
<dbReference type="PROSITE" id="PS00901">
    <property type="entry name" value="CYS_SYNTHASE"/>
    <property type="match status" value="1"/>
</dbReference>
<accession>P9WP52</accession>
<accession>L0T934</accession>
<accession>P63873</accession>
<accession>Q10624</accession>
<proteinExistence type="inferred from homology"/>
<sequence length="323" mass="34438">MTRYDSLLQALGNTPLVGLQRLSPRWDDGRDGPHVRLWAKLEDRNPTGSIKDRPAVRMIEQAEADGLLRPGATILEPTSGNTGISLAMAARLKGYRLICVMPENTSVERRQLLELYGAQIIFSAAEGGSNTAVATAKELAATNPSWVMLYQYGNPANTDSHYCGTGPELLADLPEITHFVAGLGTTGTLMGTGRFLREHVANVKIVAAEPRYGEGVYALRNMDEGFVPELYDPEILTARYSVGAVDAVRRTRELVHTEGIFAGISTGAVLHAALGVGAGALAAGERADIALVVADAGWKYLSTGAYAGSLDDAETALEGQLWA</sequence>
<comment type="function">
    <text evidence="2">Catalyzes the formation of a covalent CysO-cysteine adduct via a sulfur transfer, using the thiocarboxylated sulfur carrier protein CysO-COSH as sulfur donor and O-phospho-L-serine (OPS) as sulfur acceptor. May be of particular importance for cysteine biosynthesis in the persistent phase of M.tuberculosis.</text>
</comment>
<comment type="catalytic activity">
    <reaction evidence="2">
        <text>[CysO sulfur-carrier protein]-C-terminal-Gly-aminoethanethioate + O-phospho-L-serine + H(+) = [CysO sulfur-carrier protein]-Gly-NH-CH2-C(O)-S-L-Cys + phosphate</text>
        <dbReference type="Rhea" id="RHEA:48740"/>
        <dbReference type="Rhea" id="RHEA-COMP:12207"/>
        <dbReference type="Rhea" id="RHEA-COMP:19917"/>
        <dbReference type="ChEBI" id="CHEBI:15378"/>
        <dbReference type="ChEBI" id="CHEBI:43474"/>
        <dbReference type="ChEBI" id="CHEBI:57524"/>
        <dbReference type="ChEBI" id="CHEBI:90783"/>
        <dbReference type="ChEBI" id="CHEBI:232372"/>
        <dbReference type="EC" id="2.5.1.113"/>
    </reaction>
</comment>
<comment type="cofactor">
    <cofactor evidence="2">
        <name>pyridoxal 5'-phosphate</name>
        <dbReference type="ChEBI" id="CHEBI:597326"/>
    </cofactor>
</comment>
<comment type="pathway">
    <text>Amino-acid biosynthesis; L-cysteine biosynthesis.</text>
</comment>
<comment type="subunit">
    <text evidence="2">Homodimer.</text>
</comment>
<comment type="similarity">
    <text evidence="3">Belongs to the cysteine synthase/cystathionine beta-synthase family.</text>
</comment>